<evidence type="ECO:0000255" key="1">
    <source>
        <dbReference type="HAMAP-Rule" id="MF_01210"/>
    </source>
</evidence>
<dbReference type="EC" id="6.3.4.16" evidence="1"/>
<dbReference type="EC" id="6.3.5.5" evidence="1"/>
<dbReference type="EMBL" id="AP008226">
    <property type="protein sequence ID" value="BAD70435.1"/>
    <property type="molecule type" value="Genomic_DNA"/>
</dbReference>
<dbReference type="RefSeq" id="WP_011228069.1">
    <property type="nucleotide sequence ID" value="NC_006461.1"/>
</dbReference>
<dbReference type="RefSeq" id="YP_143878.1">
    <property type="nucleotide sequence ID" value="NC_006461.1"/>
</dbReference>
<dbReference type="SMR" id="Q5SKN1"/>
<dbReference type="EnsemblBacteria" id="BAD70435">
    <property type="protein sequence ID" value="BAD70435"/>
    <property type="gene ID" value="BAD70435"/>
</dbReference>
<dbReference type="GeneID" id="3168224"/>
<dbReference type="KEGG" id="ttj:TTHA0612"/>
<dbReference type="PATRIC" id="fig|300852.9.peg.610"/>
<dbReference type="eggNOG" id="COG0458">
    <property type="taxonomic scope" value="Bacteria"/>
</dbReference>
<dbReference type="HOGENOM" id="CLU_000513_1_0_0"/>
<dbReference type="PhylomeDB" id="Q5SKN1"/>
<dbReference type="UniPathway" id="UPA00068">
    <property type="reaction ID" value="UER00171"/>
</dbReference>
<dbReference type="UniPathway" id="UPA00070">
    <property type="reaction ID" value="UER00115"/>
</dbReference>
<dbReference type="Proteomes" id="UP000000532">
    <property type="component" value="Chromosome"/>
</dbReference>
<dbReference type="GO" id="GO:0005737">
    <property type="term" value="C:cytoplasm"/>
    <property type="evidence" value="ECO:0007669"/>
    <property type="project" value="TreeGrafter"/>
</dbReference>
<dbReference type="GO" id="GO:0005524">
    <property type="term" value="F:ATP binding"/>
    <property type="evidence" value="ECO:0007669"/>
    <property type="project" value="UniProtKB-UniRule"/>
</dbReference>
<dbReference type="GO" id="GO:0004087">
    <property type="term" value="F:carbamoyl-phosphate synthase (ammonia) activity"/>
    <property type="evidence" value="ECO:0007669"/>
    <property type="project" value="RHEA"/>
</dbReference>
<dbReference type="GO" id="GO:0004088">
    <property type="term" value="F:carbamoyl-phosphate synthase (glutamine-hydrolyzing) activity"/>
    <property type="evidence" value="ECO:0007669"/>
    <property type="project" value="UniProtKB-UniRule"/>
</dbReference>
<dbReference type="GO" id="GO:0046872">
    <property type="term" value="F:metal ion binding"/>
    <property type="evidence" value="ECO:0007669"/>
    <property type="project" value="UniProtKB-KW"/>
</dbReference>
<dbReference type="GO" id="GO:0044205">
    <property type="term" value="P:'de novo' UMP biosynthetic process"/>
    <property type="evidence" value="ECO:0007669"/>
    <property type="project" value="UniProtKB-UniRule"/>
</dbReference>
<dbReference type="GO" id="GO:0006541">
    <property type="term" value="P:glutamine metabolic process"/>
    <property type="evidence" value="ECO:0007669"/>
    <property type="project" value="TreeGrafter"/>
</dbReference>
<dbReference type="GO" id="GO:0006526">
    <property type="term" value="P:L-arginine biosynthetic process"/>
    <property type="evidence" value="ECO:0007669"/>
    <property type="project" value="UniProtKB-UniRule"/>
</dbReference>
<dbReference type="FunFam" id="1.10.1030.10:FF:000002">
    <property type="entry name" value="Carbamoyl-phosphate synthase large chain"/>
    <property type="match status" value="1"/>
</dbReference>
<dbReference type="FunFam" id="3.30.470.20:FF:000007">
    <property type="entry name" value="Carbamoyl-phosphate synthase large chain"/>
    <property type="match status" value="1"/>
</dbReference>
<dbReference type="FunFam" id="3.30.470.20:FF:000026">
    <property type="entry name" value="Carbamoyl-phosphate synthase large chain"/>
    <property type="match status" value="1"/>
</dbReference>
<dbReference type="FunFam" id="3.40.50.20:FF:000001">
    <property type="entry name" value="Carbamoyl-phosphate synthase large chain"/>
    <property type="match status" value="1"/>
</dbReference>
<dbReference type="FunFam" id="3.40.50.20:FF:000002">
    <property type="entry name" value="Carbamoyl-phosphate synthase large chain"/>
    <property type="match status" value="1"/>
</dbReference>
<dbReference type="Gene3D" id="3.40.50.20">
    <property type="match status" value="2"/>
</dbReference>
<dbReference type="Gene3D" id="3.30.470.20">
    <property type="entry name" value="ATP-grasp fold, B domain"/>
    <property type="match status" value="2"/>
</dbReference>
<dbReference type="Gene3D" id="1.10.1030.10">
    <property type="entry name" value="Carbamoyl-phosphate synthetase, large subunit oligomerisation domain"/>
    <property type="match status" value="1"/>
</dbReference>
<dbReference type="HAMAP" id="MF_01210_B">
    <property type="entry name" value="CPSase_L_chain_B"/>
    <property type="match status" value="1"/>
</dbReference>
<dbReference type="InterPro" id="IPR011761">
    <property type="entry name" value="ATP-grasp"/>
</dbReference>
<dbReference type="InterPro" id="IPR006275">
    <property type="entry name" value="CarbamoylP_synth_lsu"/>
</dbReference>
<dbReference type="InterPro" id="IPR005480">
    <property type="entry name" value="CarbamoylP_synth_lsu_oligo"/>
</dbReference>
<dbReference type="InterPro" id="IPR036897">
    <property type="entry name" value="CarbamoylP_synth_lsu_oligo_sf"/>
</dbReference>
<dbReference type="InterPro" id="IPR005479">
    <property type="entry name" value="CbamoylP_synth_lsu-like_ATP-bd"/>
</dbReference>
<dbReference type="InterPro" id="IPR005483">
    <property type="entry name" value="CbamoylP_synth_lsu_CPSase_dom"/>
</dbReference>
<dbReference type="InterPro" id="IPR011607">
    <property type="entry name" value="MGS-like_dom"/>
</dbReference>
<dbReference type="InterPro" id="IPR016185">
    <property type="entry name" value="PreATP-grasp_dom_sf"/>
</dbReference>
<dbReference type="NCBIfam" id="TIGR01369">
    <property type="entry name" value="CPSaseII_lrg"/>
    <property type="match status" value="1"/>
</dbReference>
<dbReference type="NCBIfam" id="NF003671">
    <property type="entry name" value="PRK05294.1"/>
    <property type="match status" value="1"/>
</dbReference>
<dbReference type="NCBIfam" id="NF009455">
    <property type="entry name" value="PRK12815.1"/>
    <property type="match status" value="1"/>
</dbReference>
<dbReference type="PANTHER" id="PTHR11405:SF53">
    <property type="entry name" value="CARBAMOYL-PHOSPHATE SYNTHASE [AMMONIA], MITOCHONDRIAL"/>
    <property type="match status" value="1"/>
</dbReference>
<dbReference type="PANTHER" id="PTHR11405">
    <property type="entry name" value="CARBAMOYLTRANSFERASE FAMILY MEMBER"/>
    <property type="match status" value="1"/>
</dbReference>
<dbReference type="Pfam" id="PF02786">
    <property type="entry name" value="CPSase_L_D2"/>
    <property type="match status" value="2"/>
</dbReference>
<dbReference type="Pfam" id="PF02787">
    <property type="entry name" value="CPSase_L_D3"/>
    <property type="match status" value="1"/>
</dbReference>
<dbReference type="PRINTS" id="PR00098">
    <property type="entry name" value="CPSASE"/>
</dbReference>
<dbReference type="SMART" id="SM01096">
    <property type="entry name" value="CPSase_L_D3"/>
    <property type="match status" value="1"/>
</dbReference>
<dbReference type="SUPFAM" id="SSF48108">
    <property type="entry name" value="Carbamoyl phosphate synthetase, large subunit connection domain"/>
    <property type="match status" value="1"/>
</dbReference>
<dbReference type="SUPFAM" id="SSF56059">
    <property type="entry name" value="Glutathione synthetase ATP-binding domain-like"/>
    <property type="match status" value="2"/>
</dbReference>
<dbReference type="SUPFAM" id="SSF52440">
    <property type="entry name" value="PreATP-grasp domain"/>
    <property type="match status" value="2"/>
</dbReference>
<dbReference type="PROSITE" id="PS50975">
    <property type="entry name" value="ATP_GRASP"/>
    <property type="match status" value="2"/>
</dbReference>
<dbReference type="PROSITE" id="PS00866">
    <property type="entry name" value="CPSASE_1"/>
    <property type="match status" value="2"/>
</dbReference>
<dbReference type="PROSITE" id="PS00867">
    <property type="entry name" value="CPSASE_2"/>
    <property type="match status" value="2"/>
</dbReference>
<dbReference type="PROSITE" id="PS51855">
    <property type="entry name" value="MGS"/>
    <property type="match status" value="1"/>
</dbReference>
<comment type="function">
    <text evidence="1">Large subunit of the glutamine-dependent carbamoyl phosphate synthetase (CPSase). CPSase catalyzes the formation of carbamoyl phosphate from the ammonia moiety of glutamine, carbonate, and phosphate donated by ATP, constituting the first step of 2 biosynthetic pathways, one leading to arginine and/or urea and the other to pyrimidine nucleotides. The large subunit (synthetase) binds the substrates ammonia (free or transferred from glutamine from the small subunit), hydrogencarbonate and ATP and carries out an ATP-coupled ligase reaction, activating hydrogencarbonate by forming carboxy phosphate which reacts with ammonia to form carbamoyl phosphate.</text>
</comment>
<comment type="catalytic activity">
    <reaction evidence="1">
        <text>hydrogencarbonate + L-glutamine + 2 ATP + H2O = carbamoyl phosphate + L-glutamate + 2 ADP + phosphate + 2 H(+)</text>
        <dbReference type="Rhea" id="RHEA:18633"/>
        <dbReference type="ChEBI" id="CHEBI:15377"/>
        <dbReference type="ChEBI" id="CHEBI:15378"/>
        <dbReference type="ChEBI" id="CHEBI:17544"/>
        <dbReference type="ChEBI" id="CHEBI:29985"/>
        <dbReference type="ChEBI" id="CHEBI:30616"/>
        <dbReference type="ChEBI" id="CHEBI:43474"/>
        <dbReference type="ChEBI" id="CHEBI:58228"/>
        <dbReference type="ChEBI" id="CHEBI:58359"/>
        <dbReference type="ChEBI" id="CHEBI:456216"/>
        <dbReference type="EC" id="6.3.5.5"/>
    </reaction>
</comment>
<comment type="catalytic activity">
    <molecule>Carbamoyl phosphate synthase large chain</molecule>
    <reaction evidence="1">
        <text>hydrogencarbonate + NH4(+) + 2 ATP = carbamoyl phosphate + 2 ADP + phosphate + 2 H(+)</text>
        <dbReference type="Rhea" id="RHEA:18029"/>
        <dbReference type="ChEBI" id="CHEBI:15378"/>
        <dbReference type="ChEBI" id="CHEBI:17544"/>
        <dbReference type="ChEBI" id="CHEBI:28938"/>
        <dbReference type="ChEBI" id="CHEBI:30616"/>
        <dbReference type="ChEBI" id="CHEBI:43474"/>
        <dbReference type="ChEBI" id="CHEBI:58228"/>
        <dbReference type="ChEBI" id="CHEBI:456216"/>
        <dbReference type="EC" id="6.3.4.16"/>
    </reaction>
</comment>
<comment type="cofactor">
    <cofactor evidence="1">
        <name>Mg(2+)</name>
        <dbReference type="ChEBI" id="CHEBI:18420"/>
    </cofactor>
    <cofactor evidence="1">
        <name>Mn(2+)</name>
        <dbReference type="ChEBI" id="CHEBI:29035"/>
    </cofactor>
    <text evidence="1">Binds 4 Mg(2+) or Mn(2+) ions per subunit.</text>
</comment>
<comment type="pathway">
    <text evidence="1">Amino-acid biosynthesis; L-arginine biosynthesis; carbamoyl phosphate from bicarbonate: step 1/1.</text>
</comment>
<comment type="pathway">
    <text evidence="1">Pyrimidine metabolism; UMP biosynthesis via de novo pathway; (S)-dihydroorotate from bicarbonate: step 1/3.</text>
</comment>
<comment type="subunit">
    <text evidence="1">Composed of two chains; the small (or glutamine) chain promotes the hydrolysis of glutamine to ammonia, which is used by the large (or ammonia) chain to synthesize carbamoyl phosphate. Tetramer of heterodimers (alpha,beta)4.</text>
</comment>
<comment type="domain">
    <text evidence="1">The large subunit is composed of 2 ATP-grasp domains that are involved in binding the 2 ATP molecules needed for carbamoyl phosphate synthesis. The N-terminal ATP-grasp domain (referred to as the carboxyphosphate synthetic component) catalyzes the ATP-dependent phosphorylation of hydrogencarbonate to carboxyphosphate and the subsequent nucleophilic attack by ammonia to form a carbamate intermediate. The C-terminal ATP-grasp domain (referred to as the carbamoyl phosphate synthetic component) then catalyzes the phosphorylation of carbamate with the second ATP to form the end product carbamoyl phosphate. The reactive and unstable enzyme intermediates are sequentially channeled from one active site to the next through the interior of the protein over a distance of at least 96 A.</text>
</comment>
<comment type="similarity">
    <text evidence="1">Belongs to the CarB family.</text>
</comment>
<sequence>MPPRRDLKKILIIGSGPITIGQAAEFDYSGTQAVKALRGAGYRVVLVNSNPATIMTDPELAERTYIEPLDLEHLEGILAREAPDALLPTLGGQTGLNLAMALHEEGILQKYGVELIGAKAEAIRKGEDREAFQEAMQRIGLEVPRGQLVGSVEEGLHFAREVGFPVVVRPSFTLGGTGGGIAHDEAELVEVLSRGLTLSPVHTALVEESVLGWKEFELEVMRDHADTVVIITSIENVDPMGVHTGDSITVAPAQTLSDVEYQRMRDAAKAIIREIGVETGGSNIQFAVDPKTGRQVVIEMNPRVSRSSALASKATGFPIAKIAALLAVGYRLDELPNDITRKTPASFEPTIDYVVVKIPRFAFEKFRPLRNTLGELKDELTTQMKSVGEVMAIGRTFKEALMKALRGLERDVRALAGVRTEELEKKLYPNPDRVYAVMELLRRGMPVEELYQATRIDPWFLHQMKEVVEAEEWLKTHPPKDREDWRFYKGLGLTDRRIGELVGKGEKEVRAERKALGVVPVYKTVDTCAAEFEAYTPYHYSTYELEDEVWPSQKPKVVILGSGPIRIGQGVEFDYATVHAVWALKEAGYETIMVNSNPETVSTDYDTADRLYFEPLTLEDVLNIVEHEKPIGVIATLGGQTPLKLAKGLEEAGVRLLGTPFSAIHQAEDREAFHALCQRLGIPQPEGRVAQSPEEALRLAPEVGFPLLVRPSYVLGGRAMQVVRDEGELKRYLEEVYAPLEERPSILLDRFLEGAVELDVDALSDGQEVMVAGIMEHVERAGVHSGDSATLLPPVHVPEEALKKVRDYTRRLALALGVRGLLNVQYAVVGEEVYVLEANPRASRTVPFVSKAIGVPLAKLAALIAVGKTLKELGVRDLDPVPPYYAAKEVVIPWIKFPGVIPELGPEMRSTGESMGIDQDPYLAYYKAELGAGQRLPLSGRVRFIGEGLEDLKALYQEAGFALTEGEDYDLLISLVPDPELRRAVERGLPFITTREGAWWSLKAILRARESGLRVQSLQDWHQKAPRG</sequence>
<accession>Q5SKN1</accession>
<feature type="chain" id="PRO_1000066393" description="Carbamoyl phosphate synthase large chain">
    <location>
        <begin position="1"/>
        <end position="1028"/>
    </location>
</feature>
<feature type="domain" description="ATP-grasp 1" evidence="1">
    <location>
        <begin position="133"/>
        <end position="328"/>
    </location>
</feature>
<feature type="domain" description="ATP-grasp 2" evidence="1">
    <location>
        <begin position="674"/>
        <end position="866"/>
    </location>
</feature>
<feature type="domain" description="MGS-like" evidence="1">
    <location>
        <begin position="934"/>
        <end position="1028"/>
    </location>
</feature>
<feature type="region of interest" description="Carboxyphosphate synthetic domain" evidence="1">
    <location>
        <begin position="1"/>
        <end position="409"/>
    </location>
</feature>
<feature type="region of interest" description="Oligomerization domain" evidence="1">
    <location>
        <begin position="410"/>
        <end position="549"/>
    </location>
</feature>
<feature type="region of interest" description="Carbamoyl phosphate synthetic domain" evidence="1">
    <location>
        <begin position="550"/>
        <end position="933"/>
    </location>
</feature>
<feature type="region of interest" description="Allosteric domain" evidence="1">
    <location>
        <begin position="934"/>
        <end position="1028"/>
    </location>
</feature>
<feature type="binding site" evidence="1">
    <location>
        <position position="129"/>
    </location>
    <ligand>
        <name>ATP</name>
        <dbReference type="ChEBI" id="CHEBI:30616"/>
        <label>1</label>
    </ligand>
</feature>
<feature type="binding site" evidence="1">
    <location>
        <position position="169"/>
    </location>
    <ligand>
        <name>ATP</name>
        <dbReference type="ChEBI" id="CHEBI:30616"/>
        <label>1</label>
    </ligand>
</feature>
<feature type="binding site" evidence="1">
    <location>
        <position position="175"/>
    </location>
    <ligand>
        <name>ATP</name>
        <dbReference type="ChEBI" id="CHEBI:30616"/>
        <label>1</label>
    </ligand>
</feature>
<feature type="binding site" evidence="1">
    <location>
        <position position="176"/>
    </location>
    <ligand>
        <name>ATP</name>
        <dbReference type="ChEBI" id="CHEBI:30616"/>
        <label>1</label>
    </ligand>
</feature>
<feature type="binding site" evidence="1">
    <location>
        <position position="208"/>
    </location>
    <ligand>
        <name>ATP</name>
        <dbReference type="ChEBI" id="CHEBI:30616"/>
        <label>1</label>
    </ligand>
</feature>
<feature type="binding site" evidence="1">
    <location>
        <position position="210"/>
    </location>
    <ligand>
        <name>ATP</name>
        <dbReference type="ChEBI" id="CHEBI:30616"/>
        <label>1</label>
    </ligand>
</feature>
<feature type="binding site" evidence="1">
    <location>
        <position position="215"/>
    </location>
    <ligand>
        <name>ATP</name>
        <dbReference type="ChEBI" id="CHEBI:30616"/>
        <label>1</label>
    </ligand>
</feature>
<feature type="binding site" evidence="1">
    <location>
        <position position="241"/>
    </location>
    <ligand>
        <name>ATP</name>
        <dbReference type="ChEBI" id="CHEBI:30616"/>
        <label>1</label>
    </ligand>
</feature>
<feature type="binding site" evidence="1">
    <location>
        <position position="242"/>
    </location>
    <ligand>
        <name>ATP</name>
        <dbReference type="ChEBI" id="CHEBI:30616"/>
        <label>1</label>
    </ligand>
</feature>
<feature type="binding site" evidence="1">
    <location>
        <position position="243"/>
    </location>
    <ligand>
        <name>ATP</name>
        <dbReference type="ChEBI" id="CHEBI:30616"/>
        <label>1</label>
    </ligand>
</feature>
<feature type="binding site" evidence="1">
    <location>
        <position position="285"/>
    </location>
    <ligand>
        <name>ATP</name>
        <dbReference type="ChEBI" id="CHEBI:30616"/>
        <label>1</label>
    </ligand>
</feature>
<feature type="binding site" evidence="1">
    <location>
        <position position="285"/>
    </location>
    <ligand>
        <name>Mg(2+)</name>
        <dbReference type="ChEBI" id="CHEBI:18420"/>
        <label>1</label>
    </ligand>
</feature>
<feature type="binding site" evidence="1">
    <location>
        <position position="285"/>
    </location>
    <ligand>
        <name>Mn(2+)</name>
        <dbReference type="ChEBI" id="CHEBI:29035"/>
        <label>1</label>
    </ligand>
</feature>
<feature type="binding site" evidence="1">
    <location>
        <position position="299"/>
    </location>
    <ligand>
        <name>ATP</name>
        <dbReference type="ChEBI" id="CHEBI:30616"/>
        <label>1</label>
    </ligand>
</feature>
<feature type="binding site" evidence="1">
    <location>
        <position position="299"/>
    </location>
    <ligand>
        <name>Mg(2+)</name>
        <dbReference type="ChEBI" id="CHEBI:18420"/>
        <label>1</label>
    </ligand>
</feature>
<feature type="binding site" evidence="1">
    <location>
        <position position="299"/>
    </location>
    <ligand>
        <name>Mg(2+)</name>
        <dbReference type="ChEBI" id="CHEBI:18420"/>
        <label>2</label>
    </ligand>
</feature>
<feature type="binding site" evidence="1">
    <location>
        <position position="299"/>
    </location>
    <ligand>
        <name>Mn(2+)</name>
        <dbReference type="ChEBI" id="CHEBI:29035"/>
        <label>1</label>
    </ligand>
</feature>
<feature type="binding site" evidence="1">
    <location>
        <position position="299"/>
    </location>
    <ligand>
        <name>Mn(2+)</name>
        <dbReference type="ChEBI" id="CHEBI:29035"/>
        <label>2</label>
    </ligand>
</feature>
<feature type="binding site" evidence="1">
    <location>
        <position position="301"/>
    </location>
    <ligand>
        <name>Mg(2+)</name>
        <dbReference type="ChEBI" id="CHEBI:18420"/>
        <label>2</label>
    </ligand>
</feature>
<feature type="binding site" evidence="1">
    <location>
        <position position="301"/>
    </location>
    <ligand>
        <name>Mn(2+)</name>
        <dbReference type="ChEBI" id="CHEBI:29035"/>
        <label>2</label>
    </ligand>
</feature>
<feature type="binding site" evidence="1">
    <location>
        <position position="710"/>
    </location>
    <ligand>
        <name>ATP</name>
        <dbReference type="ChEBI" id="CHEBI:30616"/>
        <label>2</label>
    </ligand>
</feature>
<feature type="binding site" evidence="1">
    <location>
        <position position="750"/>
    </location>
    <ligand>
        <name>ATP</name>
        <dbReference type="ChEBI" id="CHEBI:30616"/>
        <label>2</label>
    </ligand>
</feature>
<feature type="binding site" evidence="1">
    <location>
        <position position="752"/>
    </location>
    <ligand>
        <name>ATP</name>
        <dbReference type="ChEBI" id="CHEBI:30616"/>
        <label>2</label>
    </ligand>
</feature>
<feature type="binding site" evidence="1">
    <location>
        <position position="757"/>
    </location>
    <ligand>
        <name>ATP</name>
        <dbReference type="ChEBI" id="CHEBI:30616"/>
        <label>2</label>
    </ligand>
</feature>
<feature type="binding site" evidence="1">
    <location>
        <position position="782"/>
    </location>
    <ligand>
        <name>ATP</name>
        <dbReference type="ChEBI" id="CHEBI:30616"/>
        <label>2</label>
    </ligand>
</feature>
<feature type="binding site" evidence="1">
    <location>
        <position position="783"/>
    </location>
    <ligand>
        <name>ATP</name>
        <dbReference type="ChEBI" id="CHEBI:30616"/>
        <label>2</label>
    </ligand>
</feature>
<feature type="binding site" evidence="1">
    <location>
        <position position="784"/>
    </location>
    <ligand>
        <name>ATP</name>
        <dbReference type="ChEBI" id="CHEBI:30616"/>
        <label>2</label>
    </ligand>
</feature>
<feature type="binding site" evidence="1">
    <location>
        <position position="785"/>
    </location>
    <ligand>
        <name>ATP</name>
        <dbReference type="ChEBI" id="CHEBI:30616"/>
        <label>2</label>
    </ligand>
</feature>
<feature type="binding site" evidence="1">
    <location>
        <position position="825"/>
    </location>
    <ligand>
        <name>ATP</name>
        <dbReference type="ChEBI" id="CHEBI:30616"/>
        <label>2</label>
    </ligand>
</feature>
<feature type="binding site" evidence="1">
    <location>
        <position position="825"/>
    </location>
    <ligand>
        <name>Mg(2+)</name>
        <dbReference type="ChEBI" id="CHEBI:18420"/>
        <label>3</label>
    </ligand>
</feature>
<feature type="binding site" evidence="1">
    <location>
        <position position="825"/>
    </location>
    <ligand>
        <name>Mn(2+)</name>
        <dbReference type="ChEBI" id="CHEBI:29035"/>
        <label>3</label>
    </ligand>
</feature>
<feature type="binding site" evidence="1">
    <location>
        <position position="837"/>
    </location>
    <ligand>
        <name>ATP</name>
        <dbReference type="ChEBI" id="CHEBI:30616"/>
        <label>2</label>
    </ligand>
</feature>
<feature type="binding site" evidence="1">
    <location>
        <position position="837"/>
    </location>
    <ligand>
        <name>Mg(2+)</name>
        <dbReference type="ChEBI" id="CHEBI:18420"/>
        <label>3</label>
    </ligand>
</feature>
<feature type="binding site" evidence="1">
    <location>
        <position position="837"/>
    </location>
    <ligand>
        <name>Mg(2+)</name>
        <dbReference type="ChEBI" id="CHEBI:18420"/>
        <label>4</label>
    </ligand>
</feature>
<feature type="binding site" evidence="1">
    <location>
        <position position="837"/>
    </location>
    <ligand>
        <name>Mn(2+)</name>
        <dbReference type="ChEBI" id="CHEBI:29035"/>
        <label>3</label>
    </ligand>
</feature>
<feature type="binding site" evidence="1">
    <location>
        <position position="837"/>
    </location>
    <ligand>
        <name>Mn(2+)</name>
        <dbReference type="ChEBI" id="CHEBI:29035"/>
        <label>4</label>
    </ligand>
</feature>
<feature type="binding site" evidence="1">
    <location>
        <position position="839"/>
    </location>
    <ligand>
        <name>Mg(2+)</name>
        <dbReference type="ChEBI" id="CHEBI:18420"/>
        <label>4</label>
    </ligand>
</feature>
<feature type="binding site" evidence="1">
    <location>
        <position position="839"/>
    </location>
    <ligand>
        <name>Mn(2+)</name>
        <dbReference type="ChEBI" id="CHEBI:29035"/>
        <label>4</label>
    </ligand>
</feature>
<keyword id="KW-0028">Amino-acid biosynthesis</keyword>
<keyword id="KW-0055">Arginine biosynthesis</keyword>
<keyword id="KW-0067">ATP-binding</keyword>
<keyword id="KW-0436">Ligase</keyword>
<keyword id="KW-0460">Magnesium</keyword>
<keyword id="KW-0464">Manganese</keyword>
<keyword id="KW-0479">Metal-binding</keyword>
<keyword id="KW-0547">Nucleotide-binding</keyword>
<keyword id="KW-0665">Pyrimidine biosynthesis</keyword>
<keyword id="KW-1185">Reference proteome</keyword>
<keyword id="KW-0677">Repeat</keyword>
<reference key="1">
    <citation type="submission" date="2004-11" db="EMBL/GenBank/DDBJ databases">
        <title>Complete genome sequence of Thermus thermophilus HB8.</title>
        <authorList>
            <person name="Masui R."/>
            <person name="Kurokawa K."/>
            <person name="Nakagawa N."/>
            <person name="Tokunaga F."/>
            <person name="Koyama Y."/>
            <person name="Shibata T."/>
            <person name="Oshima T."/>
            <person name="Yokoyama S."/>
            <person name="Yasunaga T."/>
            <person name="Kuramitsu S."/>
        </authorList>
    </citation>
    <scope>NUCLEOTIDE SEQUENCE [LARGE SCALE GENOMIC DNA]</scope>
    <source>
        <strain>ATCC 27634 / DSM 579 / HB8</strain>
    </source>
</reference>
<name>CARB_THET8</name>
<proteinExistence type="inferred from homology"/>
<organism>
    <name type="scientific">Thermus thermophilus (strain ATCC 27634 / DSM 579 / HB8)</name>
    <dbReference type="NCBI Taxonomy" id="300852"/>
    <lineage>
        <taxon>Bacteria</taxon>
        <taxon>Thermotogati</taxon>
        <taxon>Deinococcota</taxon>
        <taxon>Deinococci</taxon>
        <taxon>Thermales</taxon>
        <taxon>Thermaceae</taxon>
        <taxon>Thermus</taxon>
    </lineage>
</organism>
<protein>
    <recommendedName>
        <fullName evidence="1">Carbamoyl phosphate synthase large chain</fullName>
        <ecNumber evidence="1">6.3.4.16</ecNumber>
        <ecNumber evidence="1">6.3.5.5</ecNumber>
    </recommendedName>
    <alternativeName>
        <fullName evidence="1">Carbamoyl phosphate synthetase ammonia chain</fullName>
    </alternativeName>
</protein>
<gene>
    <name evidence="1" type="primary">carB</name>
    <name type="ordered locus">TTHA0612</name>
</gene>